<feature type="chain" id="PRO_0000220254" description="Homogentisate 1,2-dioxygenase">
    <location>
        <begin position="1"/>
        <end position="453"/>
    </location>
</feature>
<feature type="region of interest" description="Disordered" evidence="2">
    <location>
        <begin position="1"/>
        <end position="42"/>
    </location>
</feature>
<feature type="active site" description="Proton acceptor" evidence="1">
    <location>
        <position position="306"/>
    </location>
</feature>
<feature type="binding site" evidence="1">
    <location>
        <position position="349"/>
    </location>
    <ligand>
        <name>Fe cation</name>
        <dbReference type="ChEBI" id="CHEBI:24875"/>
    </ligand>
</feature>
<feature type="binding site" evidence="1">
    <location>
        <position position="355"/>
    </location>
    <ligand>
        <name>Fe cation</name>
        <dbReference type="ChEBI" id="CHEBI:24875"/>
    </ligand>
</feature>
<feature type="binding site" evidence="1">
    <location>
        <position position="364"/>
    </location>
    <ligand>
        <name>homogentisate</name>
        <dbReference type="ChEBI" id="CHEBI:16169"/>
    </ligand>
</feature>
<feature type="binding site" evidence="1">
    <location>
        <position position="385"/>
    </location>
    <ligand>
        <name>Fe cation</name>
        <dbReference type="ChEBI" id="CHEBI:24875"/>
    </ligand>
</feature>
<feature type="binding site" evidence="1">
    <location>
        <position position="385"/>
    </location>
    <ligand>
        <name>homogentisate</name>
        <dbReference type="ChEBI" id="CHEBI:16169"/>
    </ligand>
</feature>
<protein>
    <recommendedName>
        <fullName evidence="1">Homogentisate 1,2-dioxygenase</fullName>
        <shortName evidence="1">HGDO</shortName>
        <ecNumber evidence="1">1.13.11.5</ecNumber>
    </recommendedName>
    <alternativeName>
        <fullName evidence="1">Homogentisate oxygenase</fullName>
    </alternativeName>
    <alternativeName>
        <fullName evidence="1">Homogentisic acid oxidase</fullName>
    </alternativeName>
    <alternativeName>
        <fullName evidence="1">Homogentisicase</fullName>
    </alternativeName>
</protein>
<comment type="function">
    <text evidence="1 5">Involved in the catabolism of homogentisate (2,5-dihydroxyphenylacetate or 2,5-OH-PhAc), a central intermediate in the degradation of phenylalanine and tyrosine. Catalyzes the oxidative ring cleavage of the aromatic ring of homogentisate to yield maleylacetoacetate.</text>
</comment>
<comment type="catalytic activity">
    <reaction evidence="1">
        <text>homogentisate + O2 = 4-maleylacetoacetate + H(+)</text>
        <dbReference type="Rhea" id="RHEA:15449"/>
        <dbReference type="ChEBI" id="CHEBI:15378"/>
        <dbReference type="ChEBI" id="CHEBI:15379"/>
        <dbReference type="ChEBI" id="CHEBI:16169"/>
        <dbReference type="ChEBI" id="CHEBI:17105"/>
        <dbReference type="EC" id="1.13.11.5"/>
    </reaction>
</comment>
<comment type="cofactor">
    <cofactor evidence="1">
        <name>Fe cation</name>
        <dbReference type="ChEBI" id="CHEBI:24875"/>
    </cofactor>
</comment>
<comment type="pathway">
    <text evidence="1">Amino-acid degradation; L-phenylalanine degradation; acetoacetate and fumarate from L-phenylalanine: step 4/6.</text>
</comment>
<comment type="subunit">
    <text evidence="1">Hexamer; dimer of trimers.</text>
</comment>
<comment type="induction">
    <text evidence="3">By nitrogen and carbon deprivation as well as in the presence of tyrosine. Also induced by phenylalanine, but only in nitrogen-free medium.</text>
</comment>
<comment type="disruption phenotype">
    <text evidence="3">Mutant is unable to use tyrosine as carbon source, lacks homogentisate dioxygenase activity, produces a melanin-like pigment and is affected in stationary-phase survival.</text>
</comment>
<comment type="similarity">
    <text evidence="1">Belongs to the homogentisate dioxygenase family.</text>
</comment>
<accession>Q9X4F5</accession>
<organism>
    <name type="scientific">Rhizobium meliloti (strain 1021)</name>
    <name type="common">Ensifer meliloti</name>
    <name type="synonym">Sinorhizobium meliloti</name>
    <dbReference type="NCBI Taxonomy" id="266834"/>
    <lineage>
        <taxon>Bacteria</taxon>
        <taxon>Pseudomonadati</taxon>
        <taxon>Pseudomonadota</taxon>
        <taxon>Alphaproteobacteria</taxon>
        <taxon>Hyphomicrobiales</taxon>
        <taxon>Rhizobiaceae</taxon>
        <taxon>Sinorhizobium/Ensifer group</taxon>
        <taxon>Sinorhizobium</taxon>
    </lineage>
</organism>
<keyword id="KW-0223">Dioxygenase</keyword>
<keyword id="KW-0408">Iron</keyword>
<keyword id="KW-0479">Metal-binding</keyword>
<keyword id="KW-0560">Oxidoreductase</keyword>
<keyword id="KW-0585">Phenylalanine catabolism</keyword>
<keyword id="KW-1185">Reference proteome</keyword>
<keyword id="KW-0828">Tyrosine catabolism</keyword>
<evidence type="ECO:0000255" key="1">
    <source>
        <dbReference type="HAMAP-Rule" id="MF_00334"/>
    </source>
</evidence>
<evidence type="ECO:0000256" key="2">
    <source>
        <dbReference type="SAM" id="MobiDB-lite"/>
    </source>
</evidence>
<evidence type="ECO:0000269" key="3">
    <source>
    </source>
</evidence>
<evidence type="ECO:0000303" key="4">
    <source>
    </source>
</evidence>
<evidence type="ECO:0000305" key="5">
    <source>
    </source>
</evidence>
<name>HGD_RHIME</name>
<proteinExistence type="evidence at protein level"/>
<reference key="1">
    <citation type="journal article" date="1999" name="Microbiology">
        <title>Identification of a novel nutrient-deprivation-induced Sinorhizobium meliloti gene (hmgA) involved in the degradation of tyrosine.</title>
        <authorList>
            <person name="Milcamps A."/>
            <person name="de Bruijn F.J."/>
        </authorList>
    </citation>
    <scope>NUCLEOTIDE SEQUENCE [GENOMIC DNA]</scope>
    <scope>FUNCTION IN TYROSINE DEGRADATION</scope>
    <scope>INDUCTION</scope>
    <scope>DISRUPTION PHENOTYPE</scope>
    <source>
        <strain>1021</strain>
    </source>
</reference>
<reference key="2">
    <citation type="journal article" date="2001" name="Proc. Natl. Acad. Sci. U.S.A.">
        <title>Analysis of the chromosome sequence of the legume symbiont Sinorhizobium meliloti strain 1021.</title>
        <authorList>
            <person name="Capela D."/>
            <person name="Barloy-Hubler F."/>
            <person name="Gouzy J."/>
            <person name="Bothe G."/>
            <person name="Ampe F."/>
            <person name="Batut J."/>
            <person name="Boistard P."/>
            <person name="Becker A."/>
            <person name="Boutry M."/>
            <person name="Cadieu E."/>
            <person name="Dreano S."/>
            <person name="Gloux S."/>
            <person name="Godrie T."/>
            <person name="Goffeau A."/>
            <person name="Kahn D."/>
            <person name="Kiss E."/>
            <person name="Lelaure V."/>
            <person name="Masuy D."/>
            <person name="Pohl T."/>
            <person name="Portetelle D."/>
            <person name="Puehler A."/>
            <person name="Purnelle B."/>
            <person name="Ramsperger U."/>
            <person name="Renard C."/>
            <person name="Thebault P."/>
            <person name="Vandenbol M."/>
            <person name="Weidner S."/>
            <person name="Galibert F."/>
        </authorList>
    </citation>
    <scope>NUCLEOTIDE SEQUENCE [LARGE SCALE GENOMIC DNA]</scope>
    <source>
        <strain>1021</strain>
    </source>
</reference>
<reference key="3">
    <citation type="journal article" date="2001" name="Science">
        <title>The composite genome of the legume symbiont Sinorhizobium meliloti.</title>
        <authorList>
            <person name="Galibert F."/>
            <person name="Finan T.M."/>
            <person name="Long S.R."/>
            <person name="Puehler A."/>
            <person name="Abola P."/>
            <person name="Ampe F."/>
            <person name="Barloy-Hubler F."/>
            <person name="Barnett M.J."/>
            <person name="Becker A."/>
            <person name="Boistard P."/>
            <person name="Bothe G."/>
            <person name="Boutry M."/>
            <person name="Bowser L."/>
            <person name="Buhrmester J."/>
            <person name="Cadieu E."/>
            <person name="Capela D."/>
            <person name="Chain P."/>
            <person name="Cowie A."/>
            <person name="Davis R.W."/>
            <person name="Dreano S."/>
            <person name="Federspiel N.A."/>
            <person name="Fisher R.F."/>
            <person name="Gloux S."/>
            <person name="Godrie T."/>
            <person name="Goffeau A."/>
            <person name="Golding B."/>
            <person name="Gouzy J."/>
            <person name="Gurjal M."/>
            <person name="Hernandez-Lucas I."/>
            <person name="Hong A."/>
            <person name="Huizar L."/>
            <person name="Hyman R.W."/>
            <person name="Jones T."/>
            <person name="Kahn D."/>
            <person name="Kahn M.L."/>
            <person name="Kalman S."/>
            <person name="Keating D.H."/>
            <person name="Kiss E."/>
            <person name="Komp C."/>
            <person name="Lelaure V."/>
            <person name="Masuy D."/>
            <person name="Palm C."/>
            <person name="Peck M.C."/>
            <person name="Pohl T.M."/>
            <person name="Portetelle D."/>
            <person name="Purnelle B."/>
            <person name="Ramsperger U."/>
            <person name="Surzycki R."/>
            <person name="Thebault P."/>
            <person name="Vandenbol M."/>
            <person name="Vorhoelter F.J."/>
            <person name="Weidner S."/>
            <person name="Wells D.H."/>
            <person name="Wong K."/>
            <person name="Yeh K.-C."/>
            <person name="Batut J."/>
        </authorList>
    </citation>
    <scope>NUCLEOTIDE SEQUENCE [LARGE SCALE GENOMIC DNA]</scope>
    <source>
        <strain>1021</strain>
    </source>
</reference>
<dbReference type="EC" id="1.13.11.5" evidence="1"/>
<dbReference type="EMBL" id="AF109131">
    <property type="protein sequence ID" value="AAD29874.1"/>
    <property type="molecule type" value="Genomic_DNA"/>
</dbReference>
<dbReference type="EMBL" id="AL591688">
    <property type="protein sequence ID" value="CAC47518.1"/>
    <property type="molecule type" value="Genomic_DNA"/>
</dbReference>
<dbReference type="RefSeq" id="NP_387045.1">
    <property type="nucleotide sequence ID" value="NC_003047.1"/>
</dbReference>
<dbReference type="RefSeq" id="WP_010970302.1">
    <property type="nucleotide sequence ID" value="NC_003047.1"/>
</dbReference>
<dbReference type="SMR" id="Q9X4F5"/>
<dbReference type="EnsemblBacteria" id="CAC47518">
    <property type="protein sequence ID" value="CAC47518"/>
    <property type="gene ID" value="SMc03208"/>
</dbReference>
<dbReference type="KEGG" id="sme:SMc03208"/>
<dbReference type="PATRIC" id="fig|266834.11.peg.4461"/>
<dbReference type="eggNOG" id="COG3508">
    <property type="taxonomic scope" value="Bacteria"/>
</dbReference>
<dbReference type="HOGENOM" id="CLU_027174_0_0_5"/>
<dbReference type="OrthoDB" id="9811253at2"/>
<dbReference type="UniPathway" id="UPA00139">
    <property type="reaction ID" value="UER00339"/>
</dbReference>
<dbReference type="Proteomes" id="UP000001976">
    <property type="component" value="Chromosome"/>
</dbReference>
<dbReference type="GO" id="GO:0005737">
    <property type="term" value="C:cytoplasm"/>
    <property type="evidence" value="ECO:0007669"/>
    <property type="project" value="TreeGrafter"/>
</dbReference>
<dbReference type="GO" id="GO:0004411">
    <property type="term" value="F:homogentisate 1,2-dioxygenase activity"/>
    <property type="evidence" value="ECO:0007669"/>
    <property type="project" value="UniProtKB-UniRule"/>
</dbReference>
<dbReference type="GO" id="GO:0005506">
    <property type="term" value="F:iron ion binding"/>
    <property type="evidence" value="ECO:0007669"/>
    <property type="project" value="UniProtKB-UniRule"/>
</dbReference>
<dbReference type="GO" id="GO:0006559">
    <property type="term" value="P:L-phenylalanine catabolic process"/>
    <property type="evidence" value="ECO:0007669"/>
    <property type="project" value="UniProtKB-UniRule"/>
</dbReference>
<dbReference type="GO" id="GO:0006572">
    <property type="term" value="P:tyrosine catabolic process"/>
    <property type="evidence" value="ECO:0007669"/>
    <property type="project" value="UniProtKB-UniRule"/>
</dbReference>
<dbReference type="CDD" id="cd07000">
    <property type="entry name" value="cupin_HGO_N"/>
    <property type="match status" value="1"/>
</dbReference>
<dbReference type="FunFam" id="2.60.120.10:FF:000053">
    <property type="entry name" value="Homogentisate 1,2-dioxygenase"/>
    <property type="match status" value="1"/>
</dbReference>
<dbReference type="Gene3D" id="2.60.120.10">
    <property type="entry name" value="Jelly Rolls"/>
    <property type="match status" value="1"/>
</dbReference>
<dbReference type="HAMAP" id="MF_00334">
    <property type="entry name" value="Homogentis_dioxygen"/>
    <property type="match status" value="1"/>
</dbReference>
<dbReference type="InterPro" id="IPR046451">
    <property type="entry name" value="HgmA_C"/>
</dbReference>
<dbReference type="InterPro" id="IPR046452">
    <property type="entry name" value="HgmA_N"/>
</dbReference>
<dbReference type="InterPro" id="IPR005708">
    <property type="entry name" value="Homogentis_dOase"/>
</dbReference>
<dbReference type="InterPro" id="IPR022950">
    <property type="entry name" value="Homogentis_dOase_bac"/>
</dbReference>
<dbReference type="InterPro" id="IPR014710">
    <property type="entry name" value="RmlC-like_jellyroll"/>
</dbReference>
<dbReference type="InterPro" id="IPR011051">
    <property type="entry name" value="RmlC_Cupin_sf"/>
</dbReference>
<dbReference type="NCBIfam" id="TIGR01015">
    <property type="entry name" value="hmgA"/>
    <property type="match status" value="1"/>
</dbReference>
<dbReference type="PANTHER" id="PTHR11056">
    <property type="entry name" value="HOMOGENTISATE 1,2-DIOXYGENASE"/>
    <property type="match status" value="1"/>
</dbReference>
<dbReference type="PANTHER" id="PTHR11056:SF0">
    <property type="entry name" value="HOMOGENTISATE 1,2-DIOXYGENASE"/>
    <property type="match status" value="1"/>
</dbReference>
<dbReference type="Pfam" id="PF04209">
    <property type="entry name" value="HgmA_C"/>
    <property type="match status" value="1"/>
</dbReference>
<dbReference type="Pfam" id="PF20510">
    <property type="entry name" value="HgmA_N"/>
    <property type="match status" value="1"/>
</dbReference>
<dbReference type="SUPFAM" id="SSF51182">
    <property type="entry name" value="RmlC-like cupins"/>
    <property type="match status" value="1"/>
</dbReference>
<sequence length="453" mass="50756">MLEKAEKQRRAGSGQQRAAGYMPGFGNDFETESLPGALPQGQNSPQKCNYGLYAEQLSGSPFTAPRGTNERSWLYRIRPSVRHTGRFRRVDYPHWKTAPHVGEHSLALGQLRWSPLPAPSEALDFLQGIRTMTTAGDALTQAGMAAHAYAFNADMVDDYFFNADGELLIVPETGAIQVFTELGRMDVEPSEICLIPRGMMFKVTRLGEEKVWRGYICENYGAKFTLPDRGPIGANCLANPRDFKTPVAAYEDKETPCRVQVKWCGSFHMVEIGHSPLDVVAWHGNYAPYKYDLKTFSPVGAILFDHPDPSIFTVLTAPSGEEGTANVDFVIFPPRWLVAEHTFRPPWYHRNIMSEFMGLIYGRYDAKEEGFVPGGMSLHNMMLAHGPDFSGFEKASNGELKPVKLDNTMAFMFETRFPQQLTTFAAELDTLQDDYMDCWSGLERKFDGTPGIK</sequence>
<gene>
    <name evidence="1 4" type="primary">hmgA</name>
    <name type="ordered locus">R02939</name>
    <name type="ORF">SMc03208</name>
</gene>